<sequence>MLLICISVLAAISAHPLSSGEMRAAVSNLVREIDSTHLTTKPSLKIIEGLEDNTVSTGESVTLRCDVLSTPTGVIYWEKDGQRIQGDKELNVFEKVLNAMGPTVESGIITSSYQIPCANLHHIGSYKCVATNGHDTVESSAKISVEGQTVKCKSTRRSAPVITMSTESRFELQDNAATLICRADRRANWNWMFEDKKIDFDSGRYELLPSGDLLIRKIQWSDMGSYFCIAHNKYGESRGETFLYPTKKHIA</sequence>
<proteinExistence type="evidence at transcript level"/>
<accession>G5EEY6</accession>
<dbReference type="EMBL" id="AF456250">
    <property type="protein sequence ID" value="AAL59608.1"/>
    <property type="molecule type" value="mRNA"/>
</dbReference>
<dbReference type="EMBL" id="BX284606">
    <property type="protein sequence ID" value="CCD63845.1"/>
    <property type="molecule type" value="Genomic_DNA"/>
</dbReference>
<dbReference type="PIR" id="T15495">
    <property type="entry name" value="T15495"/>
</dbReference>
<dbReference type="RefSeq" id="NP_509336.1">
    <property type="nucleotide sequence ID" value="NM_076935.7"/>
</dbReference>
<dbReference type="SMR" id="G5EEY6"/>
<dbReference type="FunCoup" id="G5EEY6">
    <property type="interactions" value="876"/>
</dbReference>
<dbReference type="STRING" id="6239.C14F5.2.1"/>
<dbReference type="PaxDb" id="6239-C14F5.2"/>
<dbReference type="PeptideAtlas" id="G5EEY6"/>
<dbReference type="EnsemblMetazoa" id="C14F5.2.1">
    <property type="protein sequence ID" value="C14F5.2.1"/>
    <property type="gene ID" value="WBGene00006980"/>
</dbReference>
<dbReference type="GeneID" id="192088"/>
<dbReference type="KEGG" id="cel:CELE_C14F5.2"/>
<dbReference type="AGR" id="WB:WBGene00006980"/>
<dbReference type="CTD" id="192088"/>
<dbReference type="WormBase" id="C14F5.2">
    <property type="protein sequence ID" value="CE01781"/>
    <property type="gene ID" value="WBGene00006980"/>
    <property type="gene designation" value="zig-3"/>
</dbReference>
<dbReference type="eggNOG" id="KOG3510">
    <property type="taxonomic scope" value="Eukaryota"/>
</dbReference>
<dbReference type="GeneTree" id="ENSGT00970000196086"/>
<dbReference type="HOGENOM" id="CLU_072416_1_0_1"/>
<dbReference type="InParanoid" id="G5EEY6"/>
<dbReference type="OMA" id="TYVSAKP"/>
<dbReference type="OrthoDB" id="6138780at2759"/>
<dbReference type="PhylomeDB" id="G5EEY6"/>
<dbReference type="PRO" id="PR:G5EEY6"/>
<dbReference type="Proteomes" id="UP000001940">
    <property type="component" value="Chromosome X"/>
</dbReference>
<dbReference type="Bgee" id="WBGene00006980">
    <property type="expression patterns" value="Expressed in larva and 3 other cell types or tissues"/>
</dbReference>
<dbReference type="GO" id="GO:0030424">
    <property type="term" value="C:axon"/>
    <property type="evidence" value="ECO:0000318"/>
    <property type="project" value="GO_Central"/>
</dbReference>
<dbReference type="GO" id="GO:0005576">
    <property type="term" value="C:extracellular region"/>
    <property type="evidence" value="ECO:0007669"/>
    <property type="project" value="UniProtKB-SubCell"/>
</dbReference>
<dbReference type="GO" id="GO:0005886">
    <property type="term" value="C:plasma membrane"/>
    <property type="evidence" value="ECO:0000318"/>
    <property type="project" value="GO_Central"/>
</dbReference>
<dbReference type="GO" id="GO:0098632">
    <property type="term" value="F:cell-cell adhesion mediator activity"/>
    <property type="evidence" value="ECO:0000318"/>
    <property type="project" value="GO_Central"/>
</dbReference>
<dbReference type="GO" id="GO:0007411">
    <property type="term" value="P:axon guidance"/>
    <property type="evidence" value="ECO:0000318"/>
    <property type="project" value="GO_Central"/>
</dbReference>
<dbReference type="GO" id="GO:0070593">
    <property type="term" value="P:dendrite self-avoidance"/>
    <property type="evidence" value="ECO:0000318"/>
    <property type="project" value="GO_Central"/>
</dbReference>
<dbReference type="GO" id="GO:0007156">
    <property type="term" value="P:homophilic cell adhesion via plasma membrane adhesion molecules"/>
    <property type="evidence" value="ECO:0000318"/>
    <property type="project" value="GO_Central"/>
</dbReference>
<dbReference type="CDD" id="cd00096">
    <property type="entry name" value="Ig"/>
    <property type="match status" value="1"/>
</dbReference>
<dbReference type="FunFam" id="2.60.40.10:FF:001749">
    <property type="entry name" value="Neural/ectodermal development factor IMP-L2"/>
    <property type="match status" value="1"/>
</dbReference>
<dbReference type="FunFam" id="2.60.40.10:FF:002402">
    <property type="entry name" value="Zwei Ig domain protein zig-4"/>
    <property type="match status" value="1"/>
</dbReference>
<dbReference type="Gene3D" id="2.60.40.10">
    <property type="entry name" value="Immunoglobulins"/>
    <property type="match status" value="2"/>
</dbReference>
<dbReference type="InterPro" id="IPR007110">
    <property type="entry name" value="Ig-like_dom"/>
</dbReference>
<dbReference type="InterPro" id="IPR036179">
    <property type="entry name" value="Ig-like_dom_sf"/>
</dbReference>
<dbReference type="InterPro" id="IPR013783">
    <property type="entry name" value="Ig-like_fold"/>
</dbReference>
<dbReference type="InterPro" id="IPR003599">
    <property type="entry name" value="Ig_sub"/>
</dbReference>
<dbReference type="InterPro" id="IPR003598">
    <property type="entry name" value="Ig_sub2"/>
</dbReference>
<dbReference type="PANTHER" id="PTHR10075">
    <property type="entry name" value="BASIGIN RELATED"/>
    <property type="match status" value="1"/>
</dbReference>
<dbReference type="PANTHER" id="PTHR10075:SF101">
    <property type="entry name" value="ZWEI IG DOMAIN PROTEIN ZIG-3"/>
    <property type="match status" value="1"/>
</dbReference>
<dbReference type="Pfam" id="PF13927">
    <property type="entry name" value="Ig_3"/>
    <property type="match status" value="2"/>
</dbReference>
<dbReference type="SMART" id="SM00409">
    <property type="entry name" value="IG"/>
    <property type="match status" value="2"/>
</dbReference>
<dbReference type="SMART" id="SM00408">
    <property type="entry name" value="IGc2"/>
    <property type="match status" value="2"/>
</dbReference>
<dbReference type="SUPFAM" id="SSF48726">
    <property type="entry name" value="Immunoglobulin"/>
    <property type="match status" value="2"/>
</dbReference>
<dbReference type="PROSITE" id="PS50835">
    <property type="entry name" value="IG_LIKE"/>
    <property type="match status" value="2"/>
</dbReference>
<comment type="function">
    <text evidence="4">Required for maintaining axon position of PVQ and PVP neurons postembryonically in the ventral nerve cord (VNC) by preventing axons drifting into the opposite side of the VNC that could occur during body growth and movement.</text>
</comment>
<comment type="subcellular location">
    <subcellularLocation>
        <location evidence="1">Secreted</location>
    </subcellularLocation>
</comment>
<comment type="tissue specificity">
    <text evidence="3">Expressed in PVT, AIM and ASI neurons, in vulva and weakly in body wall muscles.</text>
</comment>
<comment type="developmental stage">
    <text evidence="3">Expression begins at the late L1 larval stage.</text>
</comment>
<comment type="disruption phenotype">
    <text evidence="4 5">At the L1 larval stage, display defects in the positioning of the ventral nerve cord (VNC) axons characterized by axons of PVQ and PVP neurons, but not of RMEV, HSN and AVK neurons, drifting into the opposite VNC side (axon flip-over) (PubMed:19737747). These defects are not enhanced in a zig-4 (gk34) mutant background or in zig-4 (gk34) dig-1 (ky188), zig-4 (gk34) sax-7 (nj48) or zig-4 (gk34) egl-15 (n484) mutant background (PubMed:19737747). In a zig-1, zig-2, zig-4 or zig-5 or zig-8 mutant background, cell body positioning of ASI and ASH head neurons is normal (PubMed:22829780).</text>
</comment>
<name>ZIG3_CAEEL</name>
<evidence type="ECO:0000255" key="1"/>
<evidence type="ECO:0000255" key="2">
    <source>
        <dbReference type="PROSITE-ProRule" id="PRU00114"/>
    </source>
</evidence>
<evidence type="ECO:0000269" key="3">
    <source>
    </source>
</evidence>
<evidence type="ECO:0000269" key="4">
    <source>
    </source>
</evidence>
<evidence type="ECO:0000269" key="5">
    <source>
    </source>
</evidence>
<evidence type="ECO:0000303" key="6">
    <source>
    </source>
</evidence>
<evidence type="ECO:0000305" key="7"/>
<evidence type="ECO:0000312" key="8">
    <source>
        <dbReference type="EMBL" id="AAL59608.1"/>
    </source>
</evidence>
<evidence type="ECO:0000312" key="9">
    <source>
        <dbReference type="Proteomes" id="UP000001940"/>
    </source>
</evidence>
<evidence type="ECO:0000312" key="10">
    <source>
        <dbReference type="WormBase" id="C14F5.2"/>
    </source>
</evidence>
<reference evidence="8" key="1">
    <citation type="journal article" date="2002" name="Science">
        <title>Immunoglobulin-domain proteins required for maintenance of ventral nerve cord organization.</title>
        <authorList>
            <person name="Aurelio O."/>
            <person name="Hall D."/>
            <person name="Hobert O."/>
        </authorList>
    </citation>
    <scope>NUCLEOTIDE SEQUENCE [MRNA]</scope>
    <scope>TISSUE SPECIFICITY</scope>
    <scope>DEVELOPMENTAL STAGE</scope>
</reference>
<reference evidence="9" key="2">
    <citation type="journal article" date="1998" name="Science">
        <title>Genome sequence of the nematode C. elegans: a platform for investigating biology.</title>
        <authorList>
            <consortium name="The C. elegans sequencing consortium"/>
        </authorList>
    </citation>
    <scope>NUCLEOTIDE SEQUENCE [LARGE SCALE GENOMIC DNA]</scope>
    <source>
        <strain evidence="9">Bristol N2</strain>
    </source>
</reference>
<reference evidence="7" key="3">
    <citation type="journal article" date="2009" name="Genetics">
        <title>The small, secreted immunoglobulin protein ZIG-3 maintains axon position in Caenorhabditis elegans.</title>
        <authorList>
            <person name="Benard C."/>
            <person name="Tjoe N."/>
            <person name="Boulin T."/>
            <person name="Recio J."/>
            <person name="Hobert O."/>
        </authorList>
    </citation>
    <scope>FUNCTION</scope>
    <scope>DISRUPTION PHENOTYPE</scope>
</reference>
<reference evidence="7" key="4">
    <citation type="journal article" date="2012" name="PLoS Genet.">
        <title>The secreted immunoglobulin domain proteins ZIG-5 and ZIG-8 cooperate with L1CAM/SAX-7 to maintain nervous system integrity.</title>
        <authorList>
            <person name="Benard C.Y."/>
            <person name="Blanchette C."/>
            <person name="Recio J."/>
            <person name="Hobert O."/>
        </authorList>
    </citation>
    <scope>DISRUPTION PHENOTYPE</scope>
</reference>
<gene>
    <name evidence="10" type="primary">zig-3</name>
    <name evidence="10" type="ORF">C14F5.2</name>
</gene>
<organism evidence="9">
    <name type="scientific">Caenorhabditis elegans</name>
    <dbReference type="NCBI Taxonomy" id="6239"/>
    <lineage>
        <taxon>Eukaryota</taxon>
        <taxon>Metazoa</taxon>
        <taxon>Ecdysozoa</taxon>
        <taxon>Nematoda</taxon>
        <taxon>Chromadorea</taxon>
        <taxon>Rhabditida</taxon>
        <taxon>Rhabditina</taxon>
        <taxon>Rhabditomorpha</taxon>
        <taxon>Rhabditoidea</taxon>
        <taxon>Rhabditidae</taxon>
        <taxon>Peloderinae</taxon>
        <taxon>Caenorhabditis</taxon>
    </lineage>
</organism>
<feature type="signal peptide" evidence="1">
    <location>
        <begin position="1"/>
        <end position="19"/>
    </location>
</feature>
<feature type="chain" id="PRO_5007661504" description="Zwei Ig domain protein zig-3">
    <location>
        <begin position="20"/>
        <end position="251"/>
    </location>
</feature>
<feature type="domain" description="Ig-like C2-type 1" evidence="2">
    <location>
        <begin position="42"/>
        <end position="144"/>
    </location>
</feature>
<feature type="domain" description="Ig-like C2-type 2" evidence="2">
    <location>
        <begin position="160"/>
        <end position="244"/>
    </location>
</feature>
<feature type="disulfide bond" evidence="2">
    <location>
        <begin position="65"/>
        <end position="128"/>
    </location>
</feature>
<feature type="disulfide bond" evidence="2">
    <location>
        <begin position="181"/>
        <end position="228"/>
    </location>
</feature>
<keyword id="KW-1015">Disulfide bond</keyword>
<keyword id="KW-0393">Immunoglobulin domain</keyword>
<keyword id="KW-1185">Reference proteome</keyword>
<keyword id="KW-0677">Repeat</keyword>
<keyword id="KW-0964">Secreted</keyword>
<keyword id="KW-0732">Signal</keyword>
<protein>
    <recommendedName>
        <fullName evidence="6">Zwei Ig domain protein zig-3</fullName>
    </recommendedName>
    <alternativeName>
        <fullName evidence="6">2 Ig domain protein zig-3</fullName>
    </alternativeName>
</protein>